<organism>
    <name type="scientific">Homo sapiens</name>
    <name type="common">Human</name>
    <dbReference type="NCBI Taxonomy" id="9606"/>
    <lineage>
        <taxon>Eukaryota</taxon>
        <taxon>Metazoa</taxon>
        <taxon>Chordata</taxon>
        <taxon>Craniata</taxon>
        <taxon>Vertebrata</taxon>
        <taxon>Euteleostomi</taxon>
        <taxon>Mammalia</taxon>
        <taxon>Eutheria</taxon>
        <taxon>Euarchontoglires</taxon>
        <taxon>Primates</taxon>
        <taxon>Haplorrhini</taxon>
        <taxon>Catarrhini</taxon>
        <taxon>Hominidae</taxon>
        <taxon>Homo</taxon>
    </lineage>
</organism>
<keyword id="KW-0025">Alternative splicing</keyword>
<keyword id="KW-1267">Proteomics identification</keyword>
<keyword id="KW-1185">Reference proteome</keyword>
<gene>
    <name type="primary">DEPDC7</name>
</gene>
<sequence>MATVQEKAAALNLSALHSPAHRPPGFSVAQKPFGATYVWSSIINTLQTQVEVKKRRHRLKRHNDCFVGSEAVDVIFSHLIQNKYFGDVDIPRAKVVRVCQALMDYKVFEAVPTKVFGKDKKPTFEDSSCSLYRFTTIPNQDSQLGKENKLYSPARYADALFKSSDIRSASLEDLWENLSLKPANSPHVNISATLSPQVINEVWQEETIGRLLQLVDLPLLDSLLKQQEAVPKIPQPKRQSTMVNSSNYLDRGILKAYSDSQEDEWLSAAIDCLEYLPDQMVVEISRSFPEQPDRTDLVKELLFDAIGRYYSSREPLLNHLSDVHNGIAELLVNGKTEIALEATQLLLKLLDFQNREEFRRLLYFMAVAANPSEFKLQKESDNRMVVKRIFSKAIVDNKNLSKGKTDLLVLFLMDHQKDVFKIPGTLHKIVSVKLMAIQNGRDPNRDAGYIYCQRIDQRDYSNNTEKTTKDELLNLLKTLDEDSKLSAKEKKKLLGQFYKCHPDIFIEHFGD</sequence>
<reference key="1">
    <citation type="journal article" date="1999" name="Genome Res.">
        <title>A 7.5 Mb sequence-ready PAC contig and gene expression map of human chromosome 11p13-p14.1.</title>
        <authorList>
            <person name="Gawin B."/>
            <person name="Niederfuehr A."/>
            <person name="Schumacher N."/>
            <person name="Hummerich H."/>
            <person name="Little P.F.R."/>
            <person name="Gessler M."/>
        </authorList>
    </citation>
    <scope>NUCLEOTIDE SEQUENCE [MRNA] (ISOFORM 1)</scope>
    <scope>TISSUE SPECIFICITY</scope>
    <source>
        <tissue>Kidney</tissue>
    </source>
</reference>
<reference key="2">
    <citation type="submission" date="2001-10" db="EMBL/GenBank/DDBJ databases">
        <authorList>
            <person name="Guo J.H."/>
            <person name="Yu L."/>
        </authorList>
    </citation>
    <scope>NUCLEOTIDE SEQUENCE [LARGE SCALE MRNA] (ISOFORM 2)</scope>
    <source>
        <tissue>Testis</tissue>
    </source>
</reference>
<reference key="3">
    <citation type="journal article" date="2006" name="Nature">
        <title>Human chromosome 11 DNA sequence and analysis including novel gene identification.</title>
        <authorList>
            <person name="Taylor T.D."/>
            <person name="Noguchi H."/>
            <person name="Totoki Y."/>
            <person name="Toyoda A."/>
            <person name="Kuroki Y."/>
            <person name="Dewar K."/>
            <person name="Lloyd C."/>
            <person name="Itoh T."/>
            <person name="Takeda T."/>
            <person name="Kim D.-W."/>
            <person name="She X."/>
            <person name="Barlow K.F."/>
            <person name="Bloom T."/>
            <person name="Bruford E."/>
            <person name="Chang J.L."/>
            <person name="Cuomo C.A."/>
            <person name="Eichler E."/>
            <person name="FitzGerald M.G."/>
            <person name="Jaffe D.B."/>
            <person name="LaButti K."/>
            <person name="Nicol R."/>
            <person name="Park H.-S."/>
            <person name="Seaman C."/>
            <person name="Sougnez C."/>
            <person name="Yang X."/>
            <person name="Zimmer A.R."/>
            <person name="Zody M.C."/>
            <person name="Birren B.W."/>
            <person name="Nusbaum C."/>
            <person name="Fujiyama A."/>
            <person name="Hattori M."/>
            <person name="Rogers J."/>
            <person name="Lander E.S."/>
            <person name="Sakaki Y."/>
        </authorList>
    </citation>
    <scope>NUCLEOTIDE SEQUENCE [LARGE SCALE GENOMIC DNA]</scope>
</reference>
<reference key="4">
    <citation type="submission" date="2005-09" db="EMBL/GenBank/DDBJ databases">
        <authorList>
            <person name="Mural R.J."/>
            <person name="Istrail S."/>
            <person name="Sutton G.G."/>
            <person name="Florea L."/>
            <person name="Halpern A.L."/>
            <person name="Mobarry C.M."/>
            <person name="Lippert R."/>
            <person name="Walenz B."/>
            <person name="Shatkay H."/>
            <person name="Dew I."/>
            <person name="Miller J.R."/>
            <person name="Flanigan M.J."/>
            <person name="Edwards N.J."/>
            <person name="Bolanos R."/>
            <person name="Fasulo D."/>
            <person name="Halldorsson B.V."/>
            <person name="Hannenhalli S."/>
            <person name="Turner R."/>
            <person name="Yooseph S."/>
            <person name="Lu F."/>
            <person name="Nusskern D.R."/>
            <person name="Shue B.C."/>
            <person name="Zheng X.H."/>
            <person name="Zhong F."/>
            <person name="Delcher A.L."/>
            <person name="Huson D.H."/>
            <person name="Kravitz S.A."/>
            <person name="Mouchard L."/>
            <person name="Reinert K."/>
            <person name="Remington K.A."/>
            <person name="Clark A.G."/>
            <person name="Waterman M.S."/>
            <person name="Eichler E.E."/>
            <person name="Adams M.D."/>
            <person name="Hunkapiller M.W."/>
            <person name="Myers E.W."/>
            <person name="Venter J.C."/>
        </authorList>
    </citation>
    <scope>NUCLEOTIDE SEQUENCE [LARGE SCALE GENOMIC DNA]</scope>
</reference>
<reference key="5">
    <citation type="journal article" date="2004" name="Genome Res.">
        <title>The status, quality, and expansion of the NIH full-length cDNA project: the Mammalian Gene Collection (MGC).</title>
        <authorList>
            <consortium name="The MGC Project Team"/>
        </authorList>
    </citation>
    <scope>NUCLEOTIDE SEQUENCE [LARGE SCALE MRNA] (ISOFORM 1)</scope>
    <scope>VARIANT ILE-464</scope>
    <source>
        <tissue>Bone marrow</tissue>
    </source>
</reference>
<feature type="chain" id="PRO_0000307737" description="DEP domain-containing protein 7">
    <location>
        <begin position="1"/>
        <end position="511"/>
    </location>
</feature>
<feature type="domain" description="DEP" evidence="1">
    <location>
        <begin position="46"/>
        <end position="136"/>
    </location>
</feature>
<feature type="splice variant" id="VSP_047180" description="In isoform 2." evidence="4">
    <original>MATVQEKAAALNLSALHSPAHRPP</original>
    <variation>MRGLCEFYWQEFGIK</variation>
    <location>
        <begin position="1"/>
        <end position="24"/>
    </location>
</feature>
<feature type="sequence variant" id="VAR_053972" description="In dbSNP:rs34161108.">
    <original>A</original>
    <variation>T</variation>
    <location>
        <position position="192"/>
    </location>
</feature>
<feature type="sequence variant" id="VAR_062212" description="In dbSNP:rs17852859." evidence="3">
    <original>T</original>
    <variation>I</variation>
    <location>
        <position position="464"/>
    </location>
</feature>
<feature type="sequence conflict" description="In Ref. 2; AAM22871." evidence="5" ref="2">
    <original>F</original>
    <variation>L</variation>
    <location>
        <position position="66"/>
    </location>
</feature>
<feature type="sequence conflict" description="In Ref. 1; CAB53247 and 2; AAM22871." evidence="5" ref="1 2">
    <original>L</original>
    <variation>S</variation>
    <location>
        <position position="273"/>
    </location>
</feature>
<evidence type="ECO:0000255" key="1">
    <source>
        <dbReference type="PROSITE-ProRule" id="PRU00066"/>
    </source>
</evidence>
<evidence type="ECO:0000269" key="2">
    <source>
    </source>
</evidence>
<evidence type="ECO:0000269" key="3">
    <source>
    </source>
</evidence>
<evidence type="ECO:0000303" key="4">
    <source ref="2"/>
</evidence>
<evidence type="ECO:0000305" key="5"/>
<accession>Q96QD5</accession>
<accession>G5E941</accession>
<accession>Q8N602</accession>
<accession>Q8NCU9</accession>
<accession>Q9UGK5</accession>
<name>DEPD7_HUMAN</name>
<dbReference type="EMBL" id="AJ245600">
    <property type="protein sequence ID" value="CAB53247.1"/>
    <property type="molecule type" value="mRNA"/>
</dbReference>
<dbReference type="EMBL" id="AF447588">
    <property type="protein sequence ID" value="AAM22871.1"/>
    <property type="status" value="ALT_INIT"/>
    <property type="molecule type" value="mRNA"/>
</dbReference>
<dbReference type="EMBL" id="AC107939">
    <property type="status" value="NOT_ANNOTATED_CDS"/>
    <property type="molecule type" value="Genomic_DNA"/>
</dbReference>
<dbReference type="EMBL" id="AC131263">
    <property type="status" value="NOT_ANNOTATED_CDS"/>
    <property type="molecule type" value="Genomic_DNA"/>
</dbReference>
<dbReference type="EMBL" id="AL121926">
    <property type="protein sequence ID" value="CAC48255.1"/>
    <property type="molecule type" value="Genomic_DNA"/>
</dbReference>
<dbReference type="EMBL" id="CH471064">
    <property type="protein sequence ID" value="EAW68213.1"/>
    <property type="molecule type" value="Genomic_DNA"/>
</dbReference>
<dbReference type="EMBL" id="BC030970">
    <property type="protein sequence ID" value="AAH30970.1"/>
    <property type="molecule type" value="mRNA"/>
</dbReference>
<dbReference type="CCDS" id="CCDS41632.1">
    <molecule id="Q96QD5-1"/>
</dbReference>
<dbReference type="CCDS" id="CCDS41633.1">
    <molecule id="Q96QD5-2"/>
</dbReference>
<dbReference type="RefSeq" id="NP_001070710.1">
    <molecule id="Q96QD5-1"/>
    <property type="nucleotide sequence ID" value="NM_001077242.2"/>
</dbReference>
<dbReference type="RefSeq" id="NP_631899.2">
    <molecule id="Q96QD5-2"/>
    <property type="nucleotide sequence ID" value="NM_139160.3"/>
</dbReference>
<dbReference type="SMR" id="Q96QD5"/>
<dbReference type="BioGRID" id="124854">
    <property type="interactions" value="20"/>
</dbReference>
<dbReference type="FunCoup" id="Q96QD5">
    <property type="interactions" value="154"/>
</dbReference>
<dbReference type="IntAct" id="Q96QD5">
    <property type="interactions" value="14"/>
</dbReference>
<dbReference type="MINT" id="Q96QD5"/>
<dbReference type="STRING" id="9606.ENSP00000241051"/>
<dbReference type="GlyGen" id="Q96QD5">
    <property type="glycosylation" value="2 sites, 1 O-linked glycan (2 sites)"/>
</dbReference>
<dbReference type="iPTMnet" id="Q96QD5"/>
<dbReference type="PhosphoSitePlus" id="Q96QD5"/>
<dbReference type="BioMuta" id="DEPDC7"/>
<dbReference type="DMDM" id="74717175"/>
<dbReference type="jPOST" id="Q96QD5"/>
<dbReference type="MassIVE" id="Q96QD5"/>
<dbReference type="PaxDb" id="9606-ENSP00000241051"/>
<dbReference type="PeptideAtlas" id="Q96QD5"/>
<dbReference type="ProteomicsDB" id="33821"/>
<dbReference type="ProteomicsDB" id="77853">
    <molecule id="Q96QD5-1"/>
</dbReference>
<dbReference type="ProteomicsDB" id="77854">
    <molecule id="Q96QD5-2"/>
</dbReference>
<dbReference type="Pumba" id="Q96QD5"/>
<dbReference type="TopDownProteomics" id="Q96QD5-1">
    <molecule id="Q96QD5-1"/>
</dbReference>
<dbReference type="Antibodypedia" id="6356">
    <property type="antibodies" value="156 antibodies from 22 providers"/>
</dbReference>
<dbReference type="DNASU" id="91614"/>
<dbReference type="Ensembl" id="ENST00000241051.8">
    <molecule id="Q96QD5-1"/>
    <property type="protein sequence ID" value="ENSP00000241051.3"/>
    <property type="gene ID" value="ENSG00000121690.11"/>
</dbReference>
<dbReference type="Ensembl" id="ENST00000311388.7">
    <molecule id="Q96QD5-2"/>
    <property type="protein sequence ID" value="ENSP00000308971.3"/>
    <property type="gene ID" value="ENSG00000121690.11"/>
</dbReference>
<dbReference type="GeneID" id="91614"/>
<dbReference type="KEGG" id="hsa:91614"/>
<dbReference type="MANE-Select" id="ENST00000241051.8">
    <property type="protein sequence ID" value="ENSP00000241051.3"/>
    <property type="RefSeq nucleotide sequence ID" value="NM_001077242.2"/>
    <property type="RefSeq protein sequence ID" value="NP_001070710.1"/>
</dbReference>
<dbReference type="UCSC" id="uc001mub.3">
    <molecule id="Q96QD5-1"/>
    <property type="organism name" value="human"/>
</dbReference>
<dbReference type="AGR" id="HGNC:29899"/>
<dbReference type="CTD" id="91614"/>
<dbReference type="DisGeNET" id="91614"/>
<dbReference type="GeneCards" id="DEPDC7"/>
<dbReference type="HGNC" id="HGNC:29899">
    <property type="gene designation" value="DEPDC7"/>
</dbReference>
<dbReference type="HPA" id="ENSG00000121690">
    <property type="expression patterns" value="Group enriched (intestine, kidney, liver, testis)"/>
</dbReference>
<dbReference type="MIM" id="612294">
    <property type="type" value="gene"/>
</dbReference>
<dbReference type="neXtProt" id="NX_Q96QD5"/>
<dbReference type="OpenTargets" id="ENSG00000121690"/>
<dbReference type="PharmGKB" id="PA144596441"/>
<dbReference type="VEuPathDB" id="HostDB:ENSG00000121690"/>
<dbReference type="eggNOG" id="ENOG502QW4D">
    <property type="taxonomic scope" value="Eukaryota"/>
</dbReference>
<dbReference type="GeneTree" id="ENSGT00950000182976"/>
<dbReference type="HOGENOM" id="CLU_033776_1_0_1"/>
<dbReference type="InParanoid" id="Q96QD5"/>
<dbReference type="OMA" id="YCTRVSA"/>
<dbReference type="OrthoDB" id="276323at2759"/>
<dbReference type="PAN-GO" id="Q96QD5">
    <property type="GO annotations" value="0 GO annotations based on evolutionary models"/>
</dbReference>
<dbReference type="PhylomeDB" id="Q96QD5"/>
<dbReference type="TreeFam" id="TF328365"/>
<dbReference type="PathwayCommons" id="Q96QD5"/>
<dbReference type="SignaLink" id="Q96QD5"/>
<dbReference type="BioGRID-ORCS" id="91614">
    <property type="hits" value="21 hits in 1160 CRISPR screens"/>
</dbReference>
<dbReference type="ChiTaRS" id="DEPDC7">
    <property type="organism name" value="human"/>
</dbReference>
<dbReference type="GenomeRNAi" id="91614"/>
<dbReference type="Pharos" id="Q96QD5">
    <property type="development level" value="Tdark"/>
</dbReference>
<dbReference type="PRO" id="PR:Q96QD5"/>
<dbReference type="Proteomes" id="UP000005640">
    <property type="component" value="Chromosome 11"/>
</dbReference>
<dbReference type="RNAct" id="Q96QD5">
    <property type="molecule type" value="protein"/>
</dbReference>
<dbReference type="Bgee" id="ENSG00000121690">
    <property type="expression patterns" value="Expressed in oocyte and 140 other cell types or tissues"/>
</dbReference>
<dbReference type="GO" id="GO:0035556">
    <property type="term" value="P:intracellular signal transduction"/>
    <property type="evidence" value="ECO:0007669"/>
    <property type="project" value="InterPro"/>
</dbReference>
<dbReference type="CDD" id="cd04446">
    <property type="entry name" value="DEP_DEPDC4"/>
    <property type="match status" value="1"/>
</dbReference>
<dbReference type="CDD" id="cd04405">
    <property type="entry name" value="RhoGAP_BRCC3-like"/>
    <property type="match status" value="1"/>
</dbReference>
<dbReference type="FunFam" id="1.10.10.10:FF:000326">
    <property type="entry name" value="DEP domain-containing protein 7"/>
    <property type="match status" value="1"/>
</dbReference>
<dbReference type="Gene3D" id="1.10.10.10">
    <property type="entry name" value="Winged helix-like DNA-binding domain superfamily/Winged helix DNA-binding domain"/>
    <property type="match status" value="1"/>
</dbReference>
<dbReference type="InterPro" id="IPR000591">
    <property type="entry name" value="DEP_dom"/>
</dbReference>
<dbReference type="InterPro" id="IPR036388">
    <property type="entry name" value="WH-like_DNA-bd_sf"/>
</dbReference>
<dbReference type="InterPro" id="IPR036390">
    <property type="entry name" value="WH_DNA-bd_sf"/>
</dbReference>
<dbReference type="PANTHER" id="PTHR16206">
    <property type="entry name" value="DEP DOMAIN-CONTAINING"/>
    <property type="match status" value="1"/>
</dbReference>
<dbReference type="PANTHER" id="PTHR16206:SF9">
    <property type="entry name" value="DEP DOMAIN-CONTAINING PROTEIN 7"/>
    <property type="match status" value="1"/>
</dbReference>
<dbReference type="Pfam" id="PF00610">
    <property type="entry name" value="DEP"/>
    <property type="match status" value="1"/>
</dbReference>
<dbReference type="SMART" id="SM00049">
    <property type="entry name" value="DEP"/>
    <property type="match status" value="1"/>
</dbReference>
<dbReference type="SUPFAM" id="SSF46785">
    <property type="entry name" value="Winged helix' DNA-binding domain"/>
    <property type="match status" value="1"/>
</dbReference>
<dbReference type="PROSITE" id="PS50186">
    <property type="entry name" value="DEP"/>
    <property type="match status" value="1"/>
</dbReference>
<proteinExistence type="evidence at protein level"/>
<protein>
    <recommendedName>
        <fullName>DEP domain-containing protein 7</fullName>
    </recommendedName>
    <alternativeName>
        <fullName>Protein TR2/D15</fullName>
    </alternativeName>
</protein>
<comment type="alternative products">
    <event type="alternative splicing"/>
    <isoform>
        <id>Q96QD5-1</id>
        <name>1</name>
        <sequence type="displayed"/>
    </isoform>
    <isoform>
        <id>Q96QD5-2</id>
        <name>2</name>
        <sequence type="described" ref="VSP_047180"/>
    </isoform>
</comment>
<comment type="tissue specificity">
    <text evidence="2">Expressed in liver.</text>
</comment>
<comment type="similarity">
    <text evidence="5">Belongs to the DEPDC7 family.</text>
</comment>
<comment type="sequence caution" evidence="5">
    <conflict type="erroneous initiation">
        <sequence resource="EMBL-CDS" id="AAM22871"/>
    </conflict>
    <text>Extended N-terminus.</text>
</comment>